<protein>
    <recommendedName>
        <fullName>Type-1 angiotensin II receptor</fullName>
    </recommendedName>
    <alternativeName>
        <fullName>Angiotensin II type-1 receptor</fullName>
        <shortName>AT1 receptor</shortName>
    </alternativeName>
</protein>
<accession>Q9GLN9</accession>
<name>AGTR1_PANTR</name>
<feature type="chain" id="PRO_0000069157" description="Type-1 angiotensin II receptor">
    <location>
        <begin position="1"/>
        <end position="359"/>
    </location>
</feature>
<feature type="topological domain" description="Extracellular" evidence="2">
    <location>
        <begin position="1"/>
        <end position="25"/>
    </location>
</feature>
<feature type="transmembrane region" description="Helical; Name=1" evidence="2">
    <location>
        <begin position="26"/>
        <end position="55"/>
    </location>
</feature>
<feature type="topological domain" description="Cytoplasmic" evidence="2">
    <location>
        <begin position="56"/>
        <end position="61"/>
    </location>
</feature>
<feature type="transmembrane region" description="Helical; Name=2" evidence="2">
    <location>
        <begin position="62"/>
        <end position="89"/>
    </location>
</feature>
<feature type="topological domain" description="Extracellular" evidence="2">
    <location>
        <begin position="90"/>
        <end position="98"/>
    </location>
</feature>
<feature type="transmembrane region" description="Helical; Name=3" evidence="2">
    <location>
        <begin position="99"/>
        <end position="125"/>
    </location>
</feature>
<feature type="topological domain" description="Cytoplasmic" evidence="2">
    <location>
        <begin position="126"/>
        <end position="141"/>
    </location>
</feature>
<feature type="transmembrane region" description="Helical; Name=4" evidence="2">
    <location>
        <begin position="142"/>
        <end position="165"/>
    </location>
</feature>
<feature type="topological domain" description="Extracellular" evidence="2">
    <location>
        <begin position="166"/>
        <end position="190"/>
    </location>
</feature>
<feature type="transmembrane region" description="Helical; Name=5" evidence="2">
    <location>
        <begin position="191"/>
        <end position="216"/>
    </location>
</feature>
<feature type="topological domain" description="Cytoplasmic" evidence="2">
    <location>
        <begin position="217"/>
        <end position="239"/>
    </location>
</feature>
<feature type="transmembrane region" description="Helical; Name=6" evidence="2">
    <location>
        <begin position="240"/>
        <end position="268"/>
    </location>
</feature>
<feature type="topological domain" description="Extracellular" evidence="2">
    <location>
        <begin position="269"/>
        <end position="278"/>
    </location>
</feature>
<feature type="transmembrane region" description="Helical; Name=7" evidence="2">
    <location>
        <begin position="279"/>
        <end position="304"/>
    </location>
</feature>
<feature type="topological domain" description="Cytoplasmic" evidence="2">
    <location>
        <begin position="305"/>
        <end position="359"/>
    </location>
</feature>
<feature type="region of interest" description="Disordered" evidence="5">
    <location>
        <begin position="335"/>
        <end position="359"/>
    </location>
</feature>
<feature type="compositionally biased region" description="Polar residues" evidence="5">
    <location>
        <begin position="335"/>
        <end position="350"/>
    </location>
</feature>
<feature type="binding site" evidence="2">
    <location>
        <position position="15"/>
    </location>
    <ligand>
        <name>angiotensin II</name>
        <dbReference type="ChEBI" id="CHEBI:58506"/>
    </ligand>
</feature>
<feature type="binding site" evidence="2">
    <location>
        <position position="17"/>
    </location>
    <ligand>
        <name>angiotensin II</name>
        <dbReference type="ChEBI" id="CHEBI:58506"/>
    </ligand>
</feature>
<feature type="binding site" evidence="2">
    <location>
        <position position="167"/>
    </location>
    <ligand>
        <name>angiotensin II</name>
        <dbReference type="ChEBI" id="CHEBI:58506"/>
    </ligand>
</feature>
<feature type="binding site" evidence="2">
    <location>
        <position position="182"/>
    </location>
    <ligand>
        <name>angiotensin II</name>
        <dbReference type="ChEBI" id="CHEBI:58506"/>
    </ligand>
</feature>
<feature type="binding site" evidence="2">
    <location>
        <position position="183"/>
    </location>
    <ligand>
        <name>angiotensin II</name>
        <dbReference type="ChEBI" id="CHEBI:58506"/>
    </ligand>
</feature>
<feature type="binding site" evidence="2">
    <location>
        <position position="184"/>
    </location>
    <ligand>
        <name>angiotensin II</name>
        <dbReference type="ChEBI" id="CHEBI:58506"/>
    </ligand>
</feature>
<feature type="binding site" evidence="2">
    <location>
        <position position="199"/>
    </location>
    <ligand>
        <name>angiotensin II</name>
        <dbReference type="ChEBI" id="CHEBI:58506"/>
    </ligand>
</feature>
<feature type="lipid moiety-binding region" description="S-palmitoyl cysteine" evidence="3">
    <location>
        <position position="355"/>
    </location>
</feature>
<feature type="glycosylation site" description="N-linked (GlcNAc...) asparagine" evidence="3">
    <location>
        <position position="4"/>
    </location>
</feature>
<feature type="glycosylation site" description="N-linked (GlcNAc...) asparagine" evidence="3">
    <location>
        <position position="176"/>
    </location>
</feature>
<feature type="glycosylation site" description="N-linked (GlcNAc...) asparagine" evidence="3">
    <location>
        <position position="188"/>
    </location>
</feature>
<feature type="disulfide bond" evidence="2">
    <location>
        <begin position="18"/>
        <end position="274"/>
    </location>
</feature>
<feature type="disulfide bond" evidence="4">
    <location>
        <begin position="101"/>
        <end position="180"/>
    </location>
</feature>
<keyword id="KW-1003">Cell membrane</keyword>
<keyword id="KW-1015">Disulfide bond</keyword>
<keyword id="KW-0297">G-protein coupled receptor</keyword>
<keyword id="KW-0325">Glycoprotein</keyword>
<keyword id="KW-0449">Lipoprotein</keyword>
<keyword id="KW-0472">Membrane</keyword>
<keyword id="KW-0564">Palmitate</keyword>
<keyword id="KW-0597">Phosphoprotein</keyword>
<keyword id="KW-0675">Receptor</keyword>
<keyword id="KW-1185">Reference proteome</keyword>
<keyword id="KW-0807">Transducer</keyword>
<keyword id="KW-0812">Transmembrane</keyword>
<keyword id="KW-1133">Transmembrane helix</keyword>
<comment type="function">
    <text evidence="2">Receptor for angiotensin II, a vasoconstricting peptide, which acts as a key regulator of blood pressure and sodium retention by the kidney. The activated receptor in turn couples to G-alpha proteins G(q) (GNAQ, GNA11, GNA14 or GNA15) and thus activates phospholipase C and increases the cytosolic Ca(2+) concentrations, which in turn triggers cellular responses such as stimulation of protein kinase C.</text>
</comment>
<comment type="subunit">
    <text evidence="1 2">Interacts with MAS1 (By similarity). Interacts with ARRB1 (By similarity). Interacts with FLNA (via filamin repeat 21); increases PKA-mediated phosphorylation of FLNA (By similarity).</text>
</comment>
<comment type="subcellular location">
    <subcellularLocation>
        <location evidence="2">Cell membrane</location>
        <topology evidence="2">Multi-pass membrane protein</topology>
    </subcellularLocation>
</comment>
<comment type="PTM">
    <text evidence="2">C-terminal Ser or Thr residues may be phosphorylated.</text>
</comment>
<comment type="similarity">
    <text evidence="4">Belongs to the G-protein coupled receptor 1 family.</text>
</comment>
<dbReference type="EMBL" id="AF193445">
    <property type="protein sequence ID" value="AAG28410.1"/>
    <property type="molecule type" value="Genomic_DNA"/>
</dbReference>
<dbReference type="RefSeq" id="NP_001065261.1">
    <property type="nucleotide sequence ID" value="NM_001071793.2"/>
</dbReference>
<dbReference type="RefSeq" id="XP_009444885.1">
    <property type="nucleotide sequence ID" value="XM_009446610.4"/>
</dbReference>
<dbReference type="SMR" id="Q9GLN9"/>
<dbReference type="FunCoup" id="Q9GLN9">
    <property type="interactions" value="1635"/>
</dbReference>
<dbReference type="STRING" id="9598.ENSPTRP00000063456"/>
<dbReference type="GlyCosmos" id="Q9GLN9">
    <property type="glycosylation" value="3 sites, No reported glycans"/>
</dbReference>
<dbReference type="PaxDb" id="9598-ENSPTRP00000026691"/>
<dbReference type="GeneID" id="460762"/>
<dbReference type="KEGG" id="ptr:460762"/>
<dbReference type="CTD" id="185"/>
<dbReference type="eggNOG" id="KOG3656">
    <property type="taxonomic scope" value="Eukaryota"/>
</dbReference>
<dbReference type="HOGENOM" id="CLU_009579_8_3_1"/>
<dbReference type="InParanoid" id="Q9GLN9"/>
<dbReference type="TreeFam" id="TF330024"/>
<dbReference type="Proteomes" id="UP000002277">
    <property type="component" value="Unplaced"/>
</dbReference>
<dbReference type="GO" id="GO:0005886">
    <property type="term" value="C:plasma membrane"/>
    <property type="evidence" value="ECO:0000318"/>
    <property type="project" value="GO_Central"/>
</dbReference>
<dbReference type="GO" id="GO:0001596">
    <property type="term" value="F:angiotensin type I receptor activity"/>
    <property type="evidence" value="ECO:0000250"/>
    <property type="project" value="UniProtKB"/>
</dbReference>
<dbReference type="GO" id="GO:0004945">
    <property type="term" value="F:angiotensin type II receptor activity"/>
    <property type="evidence" value="ECO:0007669"/>
    <property type="project" value="InterPro"/>
</dbReference>
<dbReference type="GO" id="GO:0007186">
    <property type="term" value="P:G protein-coupled receptor signaling pathway"/>
    <property type="evidence" value="ECO:0000318"/>
    <property type="project" value="GO_Central"/>
</dbReference>
<dbReference type="GO" id="GO:0006954">
    <property type="term" value="P:inflammatory response"/>
    <property type="evidence" value="ECO:0000318"/>
    <property type="project" value="GO_Central"/>
</dbReference>
<dbReference type="GO" id="GO:0002034">
    <property type="term" value="P:maintenance of blood vessel diameter homeostasis by renin-angiotensin"/>
    <property type="evidence" value="ECO:0000250"/>
    <property type="project" value="UniProtKB"/>
</dbReference>
<dbReference type="GO" id="GO:0007204">
    <property type="term" value="P:positive regulation of cytosolic calcium ion concentration"/>
    <property type="evidence" value="ECO:0000318"/>
    <property type="project" value="GO_Central"/>
</dbReference>
<dbReference type="GO" id="GO:0019229">
    <property type="term" value="P:regulation of vasoconstriction"/>
    <property type="evidence" value="ECO:0007669"/>
    <property type="project" value="InterPro"/>
</dbReference>
<dbReference type="CDD" id="cd15192">
    <property type="entry name" value="7tmA_AT1R"/>
    <property type="match status" value="1"/>
</dbReference>
<dbReference type="FunFam" id="1.20.1070.10:FF:000088">
    <property type="entry name" value="Angiotensin II receptor type 1"/>
    <property type="match status" value="1"/>
</dbReference>
<dbReference type="Gene3D" id="1.20.1070.10">
    <property type="entry name" value="Rhodopsin 7-helix transmembrane proteins"/>
    <property type="match status" value="1"/>
</dbReference>
<dbReference type="InterPro" id="IPR000190">
    <property type="entry name" value="ATII_AT1_rcpt"/>
</dbReference>
<dbReference type="InterPro" id="IPR000248">
    <property type="entry name" value="ATII_rcpt"/>
</dbReference>
<dbReference type="InterPro" id="IPR050119">
    <property type="entry name" value="CCR1-9-like"/>
</dbReference>
<dbReference type="InterPro" id="IPR000276">
    <property type="entry name" value="GPCR_Rhodpsn"/>
</dbReference>
<dbReference type="InterPro" id="IPR017452">
    <property type="entry name" value="GPCR_Rhodpsn_7TM"/>
</dbReference>
<dbReference type="PANTHER" id="PTHR10489">
    <property type="entry name" value="CELL ADHESION MOLECULE"/>
    <property type="match status" value="1"/>
</dbReference>
<dbReference type="PANTHER" id="PTHR10489:SF956">
    <property type="entry name" value="TYPE-1 ANGIOTENSIN II RECEPTOR A"/>
    <property type="match status" value="1"/>
</dbReference>
<dbReference type="Pfam" id="PF00001">
    <property type="entry name" value="7tm_1"/>
    <property type="match status" value="1"/>
</dbReference>
<dbReference type="PRINTS" id="PR00241">
    <property type="entry name" value="ANGIOTENSINR"/>
</dbReference>
<dbReference type="PRINTS" id="PR00635">
    <property type="entry name" value="ANGIOTENSN1R"/>
</dbReference>
<dbReference type="PRINTS" id="PR00237">
    <property type="entry name" value="GPCRRHODOPSN"/>
</dbReference>
<dbReference type="SMART" id="SM01381">
    <property type="entry name" value="7TM_GPCR_Srsx"/>
    <property type="match status" value="1"/>
</dbReference>
<dbReference type="SUPFAM" id="SSF81321">
    <property type="entry name" value="Family A G protein-coupled receptor-like"/>
    <property type="match status" value="1"/>
</dbReference>
<dbReference type="PROSITE" id="PS00237">
    <property type="entry name" value="G_PROTEIN_RECEP_F1_1"/>
    <property type="match status" value="1"/>
</dbReference>
<dbReference type="PROSITE" id="PS50262">
    <property type="entry name" value="G_PROTEIN_RECEP_F1_2"/>
    <property type="match status" value="1"/>
</dbReference>
<evidence type="ECO:0000250" key="1">
    <source>
        <dbReference type="UniProtKB" id="P25095"/>
    </source>
</evidence>
<evidence type="ECO:0000250" key="2">
    <source>
        <dbReference type="UniProtKB" id="P30556"/>
    </source>
</evidence>
<evidence type="ECO:0000255" key="3"/>
<evidence type="ECO:0000255" key="4">
    <source>
        <dbReference type="PROSITE-ProRule" id="PRU00521"/>
    </source>
</evidence>
<evidence type="ECO:0000256" key="5">
    <source>
        <dbReference type="SAM" id="MobiDB-lite"/>
    </source>
</evidence>
<reference key="1">
    <citation type="journal article" date="2000" name="Genomics">
        <title>Human-chimpanzee DNA sequence variation in the four major genes of the renin angiotensin system.</title>
        <authorList>
            <person name="Dufour C."/>
            <person name="Casane D."/>
            <person name="Denton D."/>
            <person name="Wickings J."/>
            <person name="Corvol P."/>
            <person name="Jeunemaitre X."/>
        </authorList>
    </citation>
    <scope>NUCLEOTIDE SEQUENCE [GENOMIC DNA]</scope>
</reference>
<gene>
    <name type="primary">AGTR1</name>
</gene>
<organism>
    <name type="scientific">Pan troglodytes</name>
    <name type="common">Chimpanzee</name>
    <dbReference type="NCBI Taxonomy" id="9598"/>
    <lineage>
        <taxon>Eukaryota</taxon>
        <taxon>Metazoa</taxon>
        <taxon>Chordata</taxon>
        <taxon>Craniata</taxon>
        <taxon>Vertebrata</taxon>
        <taxon>Euteleostomi</taxon>
        <taxon>Mammalia</taxon>
        <taxon>Eutheria</taxon>
        <taxon>Euarchontoglires</taxon>
        <taxon>Primates</taxon>
        <taxon>Haplorrhini</taxon>
        <taxon>Catarrhini</taxon>
        <taxon>Hominidae</taxon>
        <taxon>Pan</taxon>
    </lineage>
</organism>
<sequence length="359" mass="41033">MILNSSTEDGIKRIQDDCPKAGRHNYIFVMIPTLYSIIFVVGIFGNSLVVIVIYFYMKLKTVASVFLLNLALADLCFLLTLPLWAVYTAMEYRWPFGNYLCKIASASVSFNLYASVFLLTCLSIDRYLAIVHPMKSRLRRTMLVAKVTCIIIWLLAGLASLPAIIHRNVFFIENTNITVCAFHYESQNSTLPIGLGLTKNILGFLFPFLIILTSYTLIWKALKKAYEIQKNKPRNDDIFKIIMAIVLFFFFSWIPHQIFTFLDVLIQLGIIRDCRIADIVDTAMPITICIAYFNNCLNPLFYGFLGKKFKKYFLQLLKYIPPKAKSHSNLSTKMSTLSYRPSDNVSSSTKKPAPCFEVE</sequence>
<proteinExistence type="inferred from homology"/>